<organism>
    <name type="scientific">Danio rerio</name>
    <name type="common">Zebrafish</name>
    <name type="synonym">Brachydanio rerio</name>
    <dbReference type="NCBI Taxonomy" id="7955"/>
    <lineage>
        <taxon>Eukaryota</taxon>
        <taxon>Metazoa</taxon>
        <taxon>Chordata</taxon>
        <taxon>Craniata</taxon>
        <taxon>Vertebrata</taxon>
        <taxon>Euteleostomi</taxon>
        <taxon>Actinopterygii</taxon>
        <taxon>Neopterygii</taxon>
        <taxon>Teleostei</taxon>
        <taxon>Ostariophysi</taxon>
        <taxon>Cypriniformes</taxon>
        <taxon>Danionidae</taxon>
        <taxon>Danioninae</taxon>
        <taxon>Danio</taxon>
    </lineage>
</organism>
<protein>
    <recommendedName>
        <fullName>Protein CASC3</fullName>
    </recommendedName>
    <alternativeName>
        <fullName>Cancer susceptibility candidate gene 3 protein homolog</fullName>
    </alternativeName>
    <alternativeName>
        <fullName>Metastatic lymph node protein 51 homolog</fullName>
        <shortName>DrMLN51</shortName>
        <shortName>Protein MLN 51 homolog</shortName>
    </alternativeName>
</protein>
<comment type="function">
    <text evidence="1">Required for pre-mRNA splicing as component of the spliceosome. Core component of the splicing-dependent multiprotein exon junction complex (EJC) deposited at splice junctions on mRNAs. The EJC is a dynamic structure consisting of core proteins and several peripheral nuclear and cytoplasmic associated factors that join the complex only transiently either during EJC assembly or during subsequent mRNA metabolism. The EJC marks the position of the exon-exon junction in the mature mRNA for the gene expression machinery and the core components remain bound to spliced mRNAs throughout all stages of mRNA metabolism thereby influencing downstream processes including nuclear mRNA export, subcellular mRNA localization, translation efficiency and nonsense-mediated mRNA decay (NMD). Binds spliced mRNA in sequence-independent manner, 20-24 nucleotides upstream of mRNA exon-exon junctions.</text>
</comment>
<comment type="subunit">
    <text evidence="1 3">Identified in the spliceosome C complex. Component of the mRNA splicing-dependent exon junction complex (EJC), which contains at least casc3, eif4a3, magoh, nxf1 and rbm8a (By similarity). Forms homooligomers (By similarity).</text>
</comment>
<comment type="subcellular location">
    <subcellularLocation>
        <location evidence="1">Cytoplasm</location>
    </subcellularLocation>
    <subcellularLocation>
        <location evidence="2">Cytoplasm</location>
        <location evidence="2">Perinuclear region</location>
    </subcellularLocation>
    <subcellularLocation>
        <location evidence="1">Nucleus</location>
    </subcellularLocation>
    <subcellularLocation>
        <location evidence="1">Nucleus speckle</location>
    </subcellularLocation>
    <subcellularLocation>
        <location evidence="1">Cytoplasm</location>
        <location evidence="1">Stress granule</location>
    </subcellularLocation>
    <subcellularLocation>
        <location evidence="3">Cytoplasm</location>
        <location evidence="3">Cytoplasmic ribonucleoprotein granule</location>
    </subcellularLocation>
    <subcellularLocation>
        <location evidence="3">Cell projection</location>
        <location evidence="3">Dendrite</location>
    </subcellularLocation>
    <text evidence="1 3">Shuttles between the nucleus and the cytoplasm in a xpo1/crm1-dependent manner. Transported to the cytoplasm as part of the exon junction complex (EJC) bound to mRNA (By similarity). In the dendrites of hippocampal neurons, localizes to dendritic ribonucleoprotein granules (By similarity).</text>
</comment>
<comment type="similarity">
    <text evidence="6">Belongs to the CASC3 family.</text>
</comment>
<dbReference type="EMBL" id="AJ555546">
    <property type="protein sequence ID" value="CAD88256.1"/>
    <property type="molecule type" value="mRNA"/>
</dbReference>
<dbReference type="EMBL" id="BC117611">
    <property type="protein sequence ID" value="AAI17612.1"/>
    <property type="molecule type" value="mRNA"/>
</dbReference>
<dbReference type="RefSeq" id="NP_991279.1">
    <property type="nucleotide sequence ID" value="NM_205716.1"/>
</dbReference>
<dbReference type="SMR" id="Q1ECZ4"/>
<dbReference type="FunCoup" id="Q1ECZ4">
    <property type="interactions" value="1271"/>
</dbReference>
<dbReference type="STRING" id="7955.ENSDARP00000040064"/>
<dbReference type="iPTMnet" id="Q1ECZ4"/>
<dbReference type="PaxDb" id="7955-ENSDARP00000040064"/>
<dbReference type="Ensembl" id="ENSDART00000040065">
    <property type="protein sequence ID" value="ENSDARP00000040064"/>
    <property type="gene ID" value="ENSDARG00000029911"/>
</dbReference>
<dbReference type="GeneID" id="403025"/>
<dbReference type="KEGG" id="dre:403025"/>
<dbReference type="AGR" id="ZFIN:ZDB-GENE-040308-2"/>
<dbReference type="CTD" id="22794"/>
<dbReference type="ZFIN" id="ZDB-GENE-040308-2">
    <property type="gene designation" value="casc3"/>
</dbReference>
<dbReference type="eggNOG" id="KOG4264">
    <property type="taxonomic scope" value="Eukaryota"/>
</dbReference>
<dbReference type="HOGENOM" id="CLU_018976_0_0_1"/>
<dbReference type="InParanoid" id="Q1ECZ4"/>
<dbReference type="OMA" id="NRMEEMS"/>
<dbReference type="OrthoDB" id="657902at2759"/>
<dbReference type="PhylomeDB" id="Q1ECZ4"/>
<dbReference type="TreeFam" id="TF329663"/>
<dbReference type="Reactome" id="R-DRE-72163">
    <property type="pathway name" value="mRNA Splicing - Major Pathway"/>
</dbReference>
<dbReference type="Reactome" id="R-DRE-975957">
    <property type="pathway name" value="Nonsense Mediated Decay (NMD) enhanced by the Exon Junction Complex (EJC)"/>
</dbReference>
<dbReference type="PRO" id="PR:Q1ECZ4"/>
<dbReference type="Proteomes" id="UP000000437">
    <property type="component" value="Chromosome 3"/>
</dbReference>
<dbReference type="Bgee" id="ENSDARG00000029911">
    <property type="expression patterns" value="Expressed in cleaving embryo and 28 other cell types or tissues"/>
</dbReference>
<dbReference type="GO" id="GO:0010494">
    <property type="term" value="C:cytoplasmic stress granule"/>
    <property type="evidence" value="ECO:0007669"/>
    <property type="project" value="UniProtKB-SubCell"/>
</dbReference>
<dbReference type="GO" id="GO:0030425">
    <property type="term" value="C:dendrite"/>
    <property type="evidence" value="ECO:0007669"/>
    <property type="project" value="UniProtKB-SubCell"/>
</dbReference>
<dbReference type="GO" id="GO:0035145">
    <property type="term" value="C:exon-exon junction complex"/>
    <property type="evidence" value="ECO:0000318"/>
    <property type="project" value="GO_Central"/>
</dbReference>
<dbReference type="GO" id="GO:0016607">
    <property type="term" value="C:nuclear speck"/>
    <property type="evidence" value="ECO:0007669"/>
    <property type="project" value="UniProtKB-SubCell"/>
</dbReference>
<dbReference type="GO" id="GO:0005634">
    <property type="term" value="C:nucleus"/>
    <property type="evidence" value="ECO:0000250"/>
    <property type="project" value="UniProtKB"/>
</dbReference>
<dbReference type="GO" id="GO:0048471">
    <property type="term" value="C:perinuclear region of cytoplasm"/>
    <property type="evidence" value="ECO:0007669"/>
    <property type="project" value="UniProtKB-SubCell"/>
</dbReference>
<dbReference type="GO" id="GO:0071006">
    <property type="term" value="C:U2-type catalytic step 1 spliceosome"/>
    <property type="evidence" value="ECO:0000250"/>
    <property type="project" value="UniProtKB"/>
</dbReference>
<dbReference type="GO" id="GO:0003729">
    <property type="term" value="F:mRNA binding"/>
    <property type="evidence" value="ECO:0007669"/>
    <property type="project" value="InterPro"/>
</dbReference>
<dbReference type="GO" id="GO:0000398">
    <property type="term" value="P:mRNA splicing, via spliceosome"/>
    <property type="evidence" value="ECO:0000250"/>
    <property type="project" value="UniProtKB"/>
</dbReference>
<dbReference type="GO" id="GO:0051028">
    <property type="term" value="P:mRNA transport"/>
    <property type="evidence" value="ECO:0007669"/>
    <property type="project" value="UniProtKB-KW"/>
</dbReference>
<dbReference type="GO" id="GO:0000184">
    <property type="term" value="P:nuclear-transcribed mRNA catabolic process, nonsense-mediated decay"/>
    <property type="evidence" value="ECO:0007669"/>
    <property type="project" value="UniProtKB-KW"/>
</dbReference>
<dbReference type="GO" id="GO:0006417">
    <property type="term" value="P:regulation of translation"/>
    <property type="evidence" value="ECO:0007669"/>
    <property type="project" value="UniProtKB-KW"/>
</dbReference>
<dbReference type="InterPro" id="IPR018545">
    <property type="entry name" value="Btz_dom"/>
</dbReference>
<dbReference type="InterPro" id="IPR028544">
    <property type="entry name" value="CASC3"/>
</dbReference>
<dbReference type="PANTHER" id="PTHR13434">
    <property type="entry name" value="PROTEIN CASC3"/>
    <property type="match status" value="1"/>
</dbReference>
<dbReference type="PANTHER" id="PTHR13434:SF0">
    <property type="entry name" value="PROTEIN CASC3"/>
    <property type="match status" value="1"/>
</dbReference>
<dbReference type="Pfam" id="PF09405">
    <property type="entry name" value="Btz"/>
    <property type="match status" value="1"/>
</dbReference>
<dbReference type="SMART" id="SM01044">
    <property type="entry name" value="Btz"/>
    <property type="match status" value="1"/>
</dbReference>
<gene>
    <name type="primary">casc3</name>
    <name type="synonym">mln51</name>
</gene>
<feature type="chain" id="PRO_0000378551" description="Protein CASC3">
    <location>
        <begin position="1"/>
        <end position="754"/>
    </location>
</feature>
<feature type="region of interest" description="Disordered" evidence="4">
    <location>
        <begin position="1"/>
        <end position="511"/>
    </location>
</feature>
<feature type="region of interest" description="Disordered" evidence="4">
    <location>
        <begin position="709"/>
        <end position="754"/>
    </location>
</feature>
<feature type="compositionally biased region" description="Basic residues" evidence="4">
    <location>
        <begin position="1"/>
        <end position="10"/>
    </location>
</feature>
<feature type="compositionally biased region" description="Low complexity" evidence="4">
    <location>
        <begin position="22"/>
        <end position="34"/>
    </location>
</feature>
<feature type="compositionally biased region" description="Basic and acidic residues" evidence="4">
    <location>
        <begin position="39"/>
        <end position="57"/>
    </location>
</feature>
<feature type="compositionally biased region" description="Acidic residues" evidence="4">
    <location>
        <begin position="58"/>
        <end position="68"/>
    </location>
</feature>
<feature type="compositionally biased region" description="Acidic residues" evidence="4">
    <location>
        <begin position="119"/>
        <end position="130"/>
    </location>
</feature>
<feature type="compositionally biased region" description="Basic and acidic residues" evidence="4">
    <location>
        <begin position="131"/>
        <end position="142"/>
    </location>
</feature>
<feature type="compositionally biased region" description="Basic and acidic residues" evidence="4">
    <location>
        <begin position="160"/>
        <end position="178"/>
    </location>
</feature>
<feature type="compositionally biased region" description="Basic and acidic residues" evidence="4">
    <location>
        <begin position="187"/>
        <end position="235"/>
    </location>
</feature>
<feature type="compositionally biased region" description="Basic and acidic residues" evidence="4">
    <location>
        <begin position="268"/>
        <end position="280"/>
    </location>
</feature>
<feature type="compositionally biased region" description="Polar residues" evidence="4">
    <location>
        <begin position="294"/>
        <end position="304"/>
    </location>
</feature>
<feature type="compositionally biased region" description="Polar residues" evidence="4">
    <location>
        <begin position="317"/>
        <end position="331"/>
    </location>
</feature>
<feature type="compositionally biased region" description="Acidic residues" evidence="4">
    <location>
        <begin position="391"/>
        <end position="401"/>
    </location>
</feature>
<feature type="compositionally biased region" description="Basic and acidic residues" evidence="4">
    <location>
        <begin position="414"/>
        <end position="428"/>
    </location>
</feature>
<feature type="compositionally biased region" description="Polar residues" evidence="4">
    <location>
        <begin position="470"/>
        <end position="480"/>
    </location>
</feature>
<feature type="compositionally biased region" description="Low complexity" evidence="4">
    <location>
        <begin position="481"/>
        <end position="494"/>
    </location>
</feature>
<feature type="compositionally biased region" description="Polar residues" evidence="4">
    <location>
        <begin position="495"/>
        <end position="509"/>
    </location>
</feature>
<feature type="compositionally biased region" description="Basic and acidic residues" evidence="4">
    <location>
        <begin position="743"/>
        <end position="754"/>
    </location>
</feature>
<feature type="modified residue" description="Phosphoserine" evidence="5">
    <location>
        <position position="477"/>
    </location>
</feature>
<feature type="modified residue" description="Phosphoserine" evidence="5">
    <location>
        <position position="481"/>
    </location>
</feature>
<feature type="modified residue" description="Phosphoserine" evidence="5">
    <location>
        <position position="483"/>
    </location>
</feature>
<feature type="sequence conflict" description="In Ref. 1; CAD88256." evidence="6" ref="1">
    <original>H</original>
    <variation>R</variation>
    <location>
        <position position="99"/>
    </location>
</feature>
<proteinExistence type="evidence at protein level"/>
<keyword id="KW-0966">Cell projection</keyword>
<keyword id="KW-0963">Cytoplasm</keyword>
<keyword id="KW-0507">mRNA processing</keyword>
<keyword id="KW-0508">mRNA splicing</keyword>
<keyword id="KW-0509">mRNA transport</keyword>
<keyword id="KW-0866">Nonsense-mediated mRNA decay</keyword>
<keyword id="KW-0539">Nucleus</keyword>
<keyword id="KW-0597">Phosphoprotein</keyword>
<keyword id="KW-1185">Reference proteome</keyword>
<keyword id="KW-0694">RNA-binding</keyword>
<keyword id="KW-0747">Spliceosome</keyword>
<keyword id="KW-0810">Translation regulation</keyword>
<keyword id="KW-0813">Transport</keyword>
<accession>Q1ECZ4</accession>
<accession>Q7T1P0</accession>
<name>CASC3_DANRE</name>
<evidence type="ECO:0000250" key="1">
    <source>
        <dbReference type="UniProtKB" id="O15234"/>
    </source>
</evidence>
<evidence type="ECO:0000250" key="2">
    <source>
        <dbReference type="UniProtKB" id="Q8K3W3"/>
    </source>
</evidence>
<evidence type="ECO:0000250" key="3">
    <source>
        <dbReference type="UniProtKB" id="Q8K3X0"/>
    </source>
</evidence>
<evidence type="ECO:0000256" key="4">
    <source>
        <dbReference type="SAM" id="MobiDB-lite"/>
    </source>
</evidence>
<evidence type="ECO:0000269" key="5">
    <source>
    </source>
</evidence>
<evidence type="ECO:0000305" key="6"/>
<reference key="1">
    <citation type="journal article" date="2004" name="J. Biol. Chem.">
        <title>Association of the breast cancer protein MLN51 with the exon junction complex via its speckle localizer and RNA binding module.</title>
        <authorList>
            <person name="Degot S."/>
            <person name="Le Hir H."/>
            <person name="Alpy F."/>
            <person name="Kedinger V."/>
            <person name="Stoll I."/>
            <person name="Wendling C."/>
            <person name="Seraphin B."/>
            <person name="Rio M.-C."/>
            <person name="Tomasetto C."/>
        </authorList>
    </citation>
    <scope>NUCLEOTIDE SEQUENCE [MRNA]</scope>
    <source>
        <tissue>Embryo</tissue>
    </source>
</reference>
<reference key="2">
    <citation type="submission" date="2006-06" db="EMBL/GenBank/DDBJ databases">
        <authorList>
            <consortium name="NIH - Zebrafish Gene Collection (ZGC) project"/>
        </authorList>
    </citation>
    <scope>NUCLEOTIDE SEQUENCE [LARGE SCALE MRNA]</scope>
    <source>
        <strain>AB</strain>
    </source>
</reference>
<reference key="3">
    <citation type="journal article" date="2008" name="J. Proteome Res.">
        <title>Online automated in vivo zebrafish phosphoproteomics: from large-scale analysis down to a single embryo.</title>
        <authorList>
            <person name="Lemeer S."/>
            <person name="Pinkse M.W.H."/>
            <person name="Mohammed S."/>
            <person name="van Breukelen B."/>
            <person name="den Hertog J."/>
            <person name="Slijper M."/>
            <person name="Heck A.J.R."/>
        </authorList>
    </citation>
    <scope>PHOSPHORYLATION [LARGE SCALE ANALYSIS] AT SER-477; SER-481 AND SER-483</scope>
    <scope>IDENTIFICATION BY MASS SPECTROMETRY</scope>
    <source>
        <tissue>Embryo</tissue>
    </source>
</reference>
<sequence>MADRRRRRRRASQDSEEEDESASGSESGRSFSASRKTRGREPEPVESPAERVAAKSDDESECVSEDGVGEAVLSDYDSADLEENGSHTEGGEEEEEAEHFSEEEASRPAAESKPVADAPTEELVEGEERDESVKEVKADEKGNLAGERQSGDGQESTEDPENKGSKGQKLDDDEDRKNPAYIPRKGLFFEHDVRGQATEEERPKGRNRKLWKDEGRWEHDKFREEEQAPKSRDELIAFYGYDIRNGTGPSDGRSYRSRKPRHAGSPSREPRRYREGDKSVRSSWQGPPPGHRNAPQSVTVQSGQPLAPLSAPKPSGRPSTQPPQRSFQGSRAPSAPHRTEGRGPSKPSLDGAPLRGPRSQPVEGERGPRLRGRSSHAVHADRSPSLVVEDICSEEEEEEGEIPTATTTYTAHHYKTEKERVPSPRKQDSGMVMEGGSAAGQVRELSPPQERQVEKKSYSRARRATRTRPSDLSKQASLDDSSSAVQQAPVAAKSESWQEQSEAGTQSGLTGLDQDLARLSLTGQNWAQNPPSYLQAEMRGIRGSMHMAGGPPQYGNMEDMGVGGGRAKRYSSQRQRPVPEPAPMHIGVMEGHYYEPMTFQGPIYTHGESPAALPPQGMLVQPEMHLPHPTHPGLHPHQSGGPLPNPAIYAAPPVSLSPGQPPPQQLLPPPFYPPPGVMTFGNTNYPYPAGGTLPPMYPNPQAQSQVYGGVTYYDTIQQQAQPKRSPPRRSSNPVTVRPPPPEDQSRKAAEEIRS</sequence>